<reference key="1">
    <citation type="journal article" date="1998" name="Nature">
        <title>Deciphering the biology of Mycobacterium tuberculosis from the complete genome sequence.</title>
        <authorList>
            <person name="Cole S.T."/>
            <person name="Brosch R."/>
            <person name="Parkhill J."/>
            <person name="Garnier T."/>
            <person name="Churcher C.M."/>
            <person name="Harris D.E."/>
            <person name="Gordon S.V."/>
            <person name="Eiglmeier K."/>
            <person name="Gas S."/>
            <person name="Barry C.E. III"/>
            <person name="Tekaia F."/>
            <person name="Badcock K."/>
            <person name="Basham D."/>
            <person name="Brown D."/>
            <person name="Chillingworth T."/>
            <person name="Connor R."/>
            <person name="Davies R.M."/>
            <person name="Devlin K."/>
            <person name="Feltwell T."/>
            <person name="Gentles S."/>
            <person name="Hamlin N."/>
            <person name="Holroyd S."/>
            <person name="Hornsby T."/>
            <person name="Jagels K."/>
            <person name="Krogh A."/>
            <person name="McLean J."/>
            <person name="Moule S."/>
            <person name="Murphy L.D."/>
            <person name="Oliver S."/>
            <person name="Osborne J."/>
            <person name="Quail M.A."/>
            <person name="Rajandream M.A."/>
            <person name="Rogers J."/>
            <person name="Rutter S."/>
            <person name="Seeger K."/>
            <person name="Skelton S."/>
            <person name="Squares S."/>
            <person name="Squares R."/>
            <person name="Sulston J.E."/>
            <person name="Taylor K."/>
            <person name="Whitehead S."/>
            <person name="Barrell B.G."/>
        </authorList>
    </citation>
    <scope>NUCLEOTIDE SEQUENCE [LARGE SCALE GENOMIC DNA]</scope>
    <source>
        <strain>ATCC 25618 / H37Rv</strain>
    </source>
</reference>
<reference key="2">
    <citation type="journal article" date="2009" name="PLoS Pathog.">
        <title>Systematic genetic nomenclature for type VII secretion systems.</title>
        <authorList>
            <person name="Bitter W."/>
            <person name="Houben E.N."/>
            <person name="Bottai D."/>
            <person name="Brodin P."/>
            <person name="Brown E.J."/>
            <person name="Cox J.S."/>
            <person name="Derbyshire K."/>
            <person name="Fortune S.M."/>
            <person name="Gao L.Y."/>
            <person name="Liu J."/>
            <person name="Gey van Pittius N.C."/>
            <person name="Pym A.S."/>
            <person name="Rubin E.J."/>
            <person name="Sherman D.R."/>
            <person name="Cole S.T."/>
            <person name="Brosch R."/>
        </authorList>
    </citation>
    <scope>NOMENCLATURE</scope>
</reference>
<reference key="3">
    <citation type="journal article" date="2011" name="Mol. Cell. Proteomics">
        <title>Proteogenomic analysis of Mycobacterium tuberculosis by high resolution mass spectrometry.</title>
        <authorList>
            <person name="Kelkar D.S."/>
            <person name="Kumar D."/>
            <person name="Kumar P."/>
            <person name="Balakrishnan L."/>
            <person name="Muthusamy B."/>
            <person name="Yadav A.K."/>
            <person name="Shrivastava P."/>
            <person name="Marimuthu A."/>
            <person name="Anand S."/>
            <person name="Sundaram H."/>
            <person name="Kingsbury R."/>
            <person name="Harsha H.C."/>
            <person name="Nair B."/>
            <person name="Prasad T.S."/>
            <person name="Chauhan D.S."/>
            <person name="Katoch K."/>
            <person name="Katoch V.M."/>
            <person name="Kumar P."/>
            <person name="Chaerkady R."/>
            <person name="Ramachandran S."/>
            <person name="Dash D."/>
            <person name="Pandey A."/>
        </authorList>
    </citation>
    <scope>IDENTIFICATION BY MASS SPECTROMETRY [LARGE SCALE ANALYSIS]</scope>
    <source>
        <strain>ATCC 25618 / H37Rv</strain>
    </source>
</reference>
<reference key="4">
    <citation type="journal article" date="2012" name="Mol. Microbiol.">
        <title>Disruption of the ESX-5 system of Mycobacterium tuberculosis causes loss of PPE protein secretion, reduction of cell wall integrity and strong attenuation.</title>
        <authorList>
            <person name="Bottai D."/>
            <person name="Di Luca M."/>
            <person name="Majlessi L."/>
            <person name="Frigui W."/>
            <person name="Simeone R."/>
            <person name="Sayes F."/>
            <person name="Bitter W."/>
            <person name="Brennan M.J."/>
            <person name="Leclerc C."/>
            <person name="Batoni G."/>
            <person name="Campa M."/>
            <person name="Brosch R."/>
            <person name="Esin S."/>
        </authorList>
    </citation>
    <scope>FUNCTION</scope>
    <source>
        <strain>H37Rv</strain>
    </source>
</reference>
<reference key="5">
    <citation type="journal article" date="2012" name="Mol. Microbiol.">
        <title>Composition of the type VII secretion system membrane complex.</title>
        <authorList>
            <person name="Houben E.N."/>
            <person name="Bestebroer J."/>
            <person name="Ummels R."/>
            <person name="Wilson L."/>
            <person name="Piersma S.R."/>
            <person name="Jimenez C.R."/>
            <person name="Ottenhoff T.H."/>
            <person name="Luirink J."/>
            <person name="Bitter W."/>
        </authorList>
    </citation>
    <scope>FUNCTION</scope>
</reference>
<reference key="6">
    <citation type="journal article" date="2012" name="PLoS ONE">
        <title>The ESX-5 associated eccB-EccC locus is essential for Mycobacterium tuberculosis viability.</title>
        <authorList>
            <person name="Di Luca M."/>
            <person name="Bottai D."/>
            <person name="Batoni G."/>
            <person name="Orgeur M."/>
            <person name="Aulicino A."/>
            <person name="Counoupas C."/>
            <person name="Campa M."/>
            <person name="Brosch R."/>
            <person name="Esin S."/>
        </authorList>
    </citation>
    <scope>FUNCTION</scope>
    <source>
        <strain>H37Rv</strain>
    </source>
</reference>
<reference key="7">
    <citation type="journal article" date="2015" name="FASEB J.">
        <title>Core component EccB1 of the Mycobacterium tuberculosis type VII secretion system is a periplasmic ATPase.</title>
        <authorList>
            <person name="Zhang X.L."/>
            <person name="Li D.F."/>
            <person name="Fleming J."/>
            <person name="Wang L.W."/>
            <person name="Zhou Y."/>
            <person name="Wang D.C."/>
            <person name="Zhang X.E."/>
            <person name="Bi L.J."/>
        </authorList>
    </citation>
    <scope>FUNCTION AS AN ATPASE</scope>
    <source>
        <strain>H37Rv</strain>
    </source>
</reference>
<evidence type="ECO:0000250" key="1">
    <source>
        <dbReference type="UniProtKB" id="B2HST3"/>
    </source>
</evidence>
<evidence type="ECO:0000250" key="2">
    <source>
        <dbReference type="UniProtKB" id="P9WNR7"/>
    </source>
</evidence>
<evidence type="ECO:0000255" key="3"/>
<evidence type="ECO:0000269" key="4">
    <source>
    </source>
</evidence>
<evidence type="ECO:0000269" key="5">
    <source>
    </source>
</evidence>
<evidence type="ECO:0000269" key="6">
    <source>
    </source>
</evidence>
<evidence type="ECO:0000303" key="7">
    <source>
    </source>
</evidence>
<evidence type="ECO:0000305" key="8"/>
<comment type="function">
    <text evidence="4 5 6">An ATPase (shown for residues 80-506) (PubMed:26396239). Part of the ESX-5 specialized secretion system, which is responsible for the secretion of EsxN and a number of PE_PGRS and PPE proteins, including PPE41.</text>
</comment>
<comment type="subunit">
    <text evidence="1">Part of the ESX-5 / type VII secretion system (T7SS), which is composed of cytosolic and membrane components. The ESX-5 membrane complex is composed of EccB5, EccC5, EccD5 and EccE5.</text>
</comment>
<comment type="subcellular location">
    <subcellularLocation>
        <location evidence="1">Cell inner membrane</location>
        <topology evidence="3">Single-pass membrane protein</topology>
    </subcellularLocation>
</comment>
<comment type="miscellaneous">
    <text evidence="6">Part of the eccB5-eccC5 operon, which is essential for in vitro growth.</text>
</comment>
<comment type="similarity">
    <text evidence="8">Belongs to the EccB family.</text>
</comment>
<protein>
    <recommendedName>
        <fullName evidence="8">ESX-5 secretion system ATPase EccB5</fullName>
        <ecNumber evidence="8">3.6.-.-</ecNumber>
    </recommendedName>
    <alternativeName>
        <fullName evidence="7">ESX conserved component B5</fullName>
    </alternativeName>
    <alternativeName>
        <fullName evidence="8">Type VII secretion system protein EccB5</fullName>
        <shortName evidence="8">T7SS protein EccB5</shortName>
    </alternativeName>
</protein>
<keyword id="KW-0002">3D-structure</keyword>
<keyword id="KW-0067">ATP-binding</keyword>
<keyword id="KW-0997">Cell inner membrane</keyword>
<keyword id="KW-1003">Cell membrane</keyword>
<keyword id="KW-1015">Disulfide bond</keyword>
<keyword id="KW-0378">Hydrolase</keyword>
<keyword id="KW-0472">Membrane</keyword>
<keyword id="KW-0547">Nucleotide-binding</keyword>
<keyword id="KW-1185">Reference proteome</keyword>
<keyword id="KW-0812">Transmembrane</keyword>
<keyword id="KW-1133">Transmembrane helix</keyword>
<keyword id="KW-0813">Transport</keyword>
<gene>
    <name evidence="7" type="primary">eccB5</name>
    <name type="ordered locus">Rv1782</name>
</gene>
<organism>
    <name type="scientific">Mycobacterium tuberculosis (strain ATCC 25618 / H37Rv)</name>
    <dbReference type="NCBI Taxonomy" id="83332"/>
    <lineage>
        <taxon>Bacteria</taxon>
        <taxon>Bacillati</taxon>
        <taxon>Actinomycetota</taxon>
        <taxon>Actinomycetes</taxon>
        <taxon>Mycobacteriales</taxon>
        <taxon>Mycobacteriaceae</taxon>
        <taxon>Mycobacterium</taxon>
        <taxon>Mycobacterium tuberculosis complex</taxon>
    </lineage>
</organism>
<name>ECCB5_MYCTU</name>
<proteinExistence type="evidence at protein level"/>
<dbReference type="EC" id="3.6.-.-" evidence="8"/>
<dbReference type="EMBL" id="AL123456">
    <property type="protein sequence ID" value="CCP44549.1"/>
    <property type="molecule type" value="Genomic_DNA"/>
</dbReference>
<dbReference type="PIR" id="H70928">
    <property type="entry name" value="H70928"/>
</dbReference>
<dbReference type="RefSeq" id="NP_216298.1">
    <property type="nucleotide sequence ID" value="NC_000962.3"/>
</dbReference>
<dbReference type="RefSeq" id="WP_003899021.1">
    <property type="nucleotide sequence ID" value="NZ_NVQJ01000037.1"/>
</dbReference>
<dbReference type="PDB" id="7NP7">
    <property type="method" value="EM"/>
    <property type="resolution" value="4.03 A"/>
    <property type="chains" value="B1/B2/B3/B4/B5/B6=1-506"/>
</dbReference>
<dbReference type="PDB" id="7NPR">
    <property type="method" value="EM"/>
    <property type="resolution" value="3.82 A"/>
    <property type="chains" value="B1/B2/B3/B4/B5/B6=1-506"/>
</dbReference>
<dbReference type="PDB" id="7NPS">
    <property type="method" value="EM"/>
    <property type="resolution" value="3.81 A"/>
    <property type="chains" value="B1/B2/B3/B4/B5/B6=1-506"/>
</dbReference>
<dbReference type="PDB" id="7NPU">
    <property type="method" value="EM"/>
    <property type="resolution" value="4.48 A"/>
    <property type="chains" value="B1/B2/B3/B4/B5/B6=1-506"/>
</dbReference>
<dbReference type="PDB" id="7NPV">
    <property type="method" value="EM"/>
    <property type="resolution" value="6.66 A"/>
    <property type="chains" value="B1/B2/B3/B4/B5/B6=1-506"/>
</dbReference>
<dbReference type="PDBsum" id="7NP7"/>
<dbReference type="PDBsum" id="7NPR"/>
<dbReference type="PDBsum" id="7NPS"/>
<dbReference type="PDBsum" id="7NPU"/>
<dbReference type="PDBsum" id="7NPV"/>
<dbReference type="EMDB" id="EMD-12514"/>
<dbReference type="EMDB" id="EMD-12517"/>
<dbReference type="EMDB" id="EMD-12518"/>
<dbReference type="EMDB" id="EMD-12519"/>
<dbReference type="EMDB" id="EMD-12521"/>
<dbReference type="EMDB" id="EMD-12522"/>
<dbReference type="SMR" id="P9WNQ9"/>
<dbReference type="STRING" id="83332.Rv1782"/>
<dbReference type="PaxDb" id="83332-Rv1782"/>
<dbReference type="DNASU" id="885347"/>
<dbReference type="GeneID" id="885347"/>
<dbReference type="KEGG" id="mtu:Rv1782"/>
<dbReference type="KEGG" id="mtv:RVBD_1782"/>
<dbReference type="TubercuList" id="Rv1782"/>
<dbReference type="eggNOG" id="COG3266">
    <property type="taxonomic scope" value="Bacteria"/>
</dbReference>
<dbReference type="InParanoid" id="P9WNQ9"/>
<dbReference type="OrthoDB" id="3847604at2"/>
<dbReference type="PhylomeDB" id="P9WNQ9"/>
<dbReference type="Proteomes" id="UP000001584">
    <property type="component" value="Chromosome"/>
</dbReference>
<dbReference type="GO" id="GO:0009274">
    <property type="term" value="C:peptidoglycan-based cell wall"/>
    <property type="evidence" value="ECO:0007005"/>
    <property type="project" value="MTBBASE"/>
</dbReference>
<dbReference type="GO" id="GO:0005886">
    <property type="term" value="C:plasma membrane"/>
    <property type="evidence" value="ECO:0007005"/>
    <property type="project" value="MTBBASE"/>
</dbReference>
<dbReference type="GO" id="GO:0005524">
    <property type="term" value="F:ATP binding"/>
    <property type="evidence" value="ECO:0007669"/>
    <property type="project" value="UniProtKB-KW"/>
</dbReference>
<dbReference type="GO" id="GO:0016787">
    <property type="term" value="F:hydrolase activity"/>
    <property type="evidence" value="ECO:0007669"/>
    <property type="project" value="UniProtKB-KW"/>
</dbReference>
<dbReference type="FunFam" id="3.30.2390.20:FF:000001">
    <property type="entry name" value="ESX-1 secretion system ATPase EccB1"/>
    <property type="match status" value="1"/>
</dbReference>
<dbReference type="Gene3D" id="3.30.2390.20">
    <property type="entry name" value="Type VII secretion system EccB, repeat 1 domain"/>
    <property type="match status" value="1"/>
</dbReference>
<dbReference type="Gene3D" id="2.40.50.910">
    <property type="entry name" value="Type VII secretion system EccB, repeat 3 domain"/>
    <property type="match status" value="1"/>
</dbReference>
<dbReference type="InterPro" id="IPR007795">
    <property type="entry name" value="T7SS_EccB"/>
</dbReference>
<dbReference type="InterPro" id="IPR044857">
    <property type="entry name" value="T7SS_EccB_R1"/>
</dbReference>
<dbReference type="InterPro" id="IPR042485">
    <property type="entry name" value="T7SS_EccB_R3"/>
</dbReference>
<dbReference type="NCBIfam" id="TIGR03919">
    <property type="entry name" value="T7SS_EccB"/>
    <property type="match status" value="1"/>
</dbReference>
<dbReference type="PANTHER" id="PTHR40765">
    <property type="entry name" value="ESX-2 SECRETION SYSTEM ATPASE ECCB2"/>
    <property type="match status" value="1"/>
</dbReference>
<dbReference type="PANTHER" id="PTHR40765:SF2">
    <property type="entry name" value="ESX-2 SECRETION SYSTEM ATPASE ECCB2"/>
    <property type="match status" value="1"/>
</dbReference>
<dbReference type="Pfam" id="PF05108">
    <property type="entry name" value="T7SS_ESX1_EccB"/>
    <property type="match status" value="1"/>
</dbReference>
<sequence>MAEESRGQRGSGYGLGLSTRTQVTGYQFLARRTAMALTRWRVRMEIEPGRRQTLAVVASVSAALVICLGALLWSFISPSGQLNESPIIADRDSGALYVRVGDRLYPALNLASARLITGRPDNPHLVRSSQIATMPRGPLVGIPGAPSSFSPKSPPASSWLVCDTVATSSSIGSLQGVTVTVIDGTPDLTGHRQILSGSDAVVLRYGGDAWVIREGRRSRIEPTNRAVLLPLGLTPEQVSQARPMSRALFDALPVGPELLVPEVPNAGGPATFPGAPGPIGTVIVTPQISGPQQYSLVLGDGVQTLPPLVAQILQNAGSAGNTKPLTVEPSTLAKMPVVNRLDLSAYPDNPLEVVDIREHPSTCWWWERTAGENRARVRVVSGPTIPVAATEMNKVVSLVKADTSGRQADQVYFGPDHANFVAVTGNNPGAQTSESLWWVTDAGARFGVEDSKEARDALGLTLTPSLAPWVALRLLPQGPTLSRADALVEHDTLPMDMTPAELVVPK</sequence>
<accession>P9WNQ9</accession>
<accession>L0TAD6</accession>
<accession>O53933</accession>
<accession>Q7D7Z1</accession>
<feature type="chain" id="PRO_0000393232" description="ESX-5 secretion system ATPase EccB5">
    <location>
        <begin position="1"/>
        <end position="506"/>
    </location>
</feature>
<feature type="topological domain" description="Cytoplasmic" evidence="8">
    <location>
        <begin position="1"/>
        <end position="55"/>
    </location>
</feature>
<feature type="transmembrane region" description="Helical" evidence="3">
    <location>
        <begin position="56"/>
        <end position="76"/>
    </location>
</feature>
<feature type="topological domain" description="Periplasmic" evidence="8">
    <location>
        <begin position="77"/>
        <end position="506"/>
    </location>
</feature>
<feature type="disulfide bond" evidence="2">
    <location>
        <begin position="162"/>
        <end position="363"/>
    </location>
</feature>